<feature type="chain" id="PRO_0000057201" description="Ribonuclease pancreatic">
    <location>
        <begin position="1"/>
        <end position="128"/>
    </location>
</feature>
<feature type="region of interest" description="Disordered" evidence="2">
    <location>
        <begin position="1"/>
        <end position="23"/>
    </location>
</feature>
<feature type="active site" description="Proton acceptor" evidence="1">
    <location>
        <position position="12"/>
    </location>
</feature>
<feature type="active site" description="Proton donor" evidence="1">
    <location>
        <position position="119"/>
    </location>
</feature>
<feature type="binding site" evidence="1">
    <location>
        <position position="7"/>
    </location>
    <ligand>
        <name>substrate</name>
    </ligand>
</feature>
<feature type="binding site" evidence="1">
    <location>
        <position position="10"/>
    </location>
    <ligand>
        <name>substrate</name>
    </ligand>
</feature>
<feature type="binding site" evidence="1">
    <location>
        <begin position="41"/>
        <end position="45"/>
    </location>
    <ligand>
        <name>substrate</name>
    </ligand>
</feature>
<feature type="binding site" evidence="1">
    <location>
        <position position="66"/>
    </location>
    <ligand>
        <name>substrate</name>
    </ligand>
</feature>
<feature type="binding site" evidence="1">
    <location>
        <position position="85"/>
    </location>
    <ligand>
        <name>substrate</name>
    </ligand>
</feature>
<feature type="disulfide bond" evidence="1">
    <location>
        <begin position="26"/>
        <end position="84"/>
    </location>
</feature>
<feature type="disulfide bond" evidence="1">
    <location>
        <begin position="40"/>
        <end position="95"/>
    </location>
</feature>
<feature type="disulfide bond" evidence="1">
    <location>
        <begin position="58"/>
        <end position="110"/>
    </location>
</feature>
<feature type="disulfide bond" evidence="1">
    <location>
        <begin position="65"/>
        <end position="72"/>
    </location>
</feature>
<dbReference type="EC" id="4.6.1.18"/>
<dbReference type="PIR" id="A00824">
    <property type="entry name" value="NRYY"/>
</dbReference>
<dbReference type="SMR" id="P00677"/>
<dbReference type="OrthoDB" id="8573660at2759"/>
<dbReference type="GO" id="GO:0005576">
    <property type="term" value="C:extracellular region"/>
    <property type="evidence" value="ECO:0007669"/>
    <property type="project" value="UniProtKB-SubCell"/>
</dbReference>
<dbReference type="GO" id="GO:0016829">
    <property type="term" value="F:lyase activity"/>
    <property type="evidence" value="ECO:0007669"/>
    <property type="project" value="UniProtKB-KW"/>
</dbReference>
<dbReference type="GO" id="GO:0003676">
    <property type="term" value="F:nucleic acid binding"/>
    <property type="evidence" value="ECO:0007669"/>
    <property type="project" value="InterPro"/>
</dbReference>
<dbReference type="GO" id="GO:0004522">
    <property type="term" value="F:ribonuclease A activity"/>
    <property type="evidence" value="ECO:0007669"/>
    <property type="project" value="UniProtKB-EC"/>
</dbReference>
<dbReference type="GO" id="GO:0050830">
    <property type="term" value="P:defense response to Gram-positive bacterium"/>
    <property type="evidence" value="ECO:0007669"/>
    <property type="project" value="TreeGrafter"/>
</dbReference>
<dbReference type="CDD" id="cd06265">
    <property type="entry name" value="RNase_A_canonical"/>
    <property type="match status" value="1"/>
</dbReference>
<dbReference type="FunFam" id="3.10.130.10:FF:000001">
    <property type="entry name" value="Ribonuclease pancreatic"/>
    <property type="match status" value="1"/>
</dbReference>
<dbReference type="Gene3D" id="3.10.130.10">
    <property type="entry name" value="Ribonuclease A-like domain"/>
    <property type="match status" value="1"/>
</dbReference>
<dbReference type="InterPro" id="IPR001427">
    <property type="entry name" value="RNaseA"/>
</dbReference>
<dbReference type="InterPro" id="IPR036816">
    <property type="entry name" value="RNaseA-like_dom_sf"/>
</dbReference>
<dbReference type="InterPro" id="IPR023411">
    <property type="entry name" value="RNaseA_AS"/>
</dbReference>
<dbReference type="InterPro" id="IPR023412">
    <property type="entry name" value="RNaseA_domain"/>
</dbReference>
<dbReference type="PANTHER" id="PTHR11437">
    <property type="entry name" value="RIBONUCLEASE"/>
    <property type="match status" value="1"/>
</dbReference>
<dbReference type="PANTHER" id="PTHR11437:SF24">
    <property type="entry name" value="RIBONUCLEASE PANCREATIC"/>
    <property type="match status" value="1"/>
</dbReference>
<dbReference type="Pfam" id="PF00074">
    <property type="entry name" value="RnaseA"/>
    <property type="match status" value="1"/>
</dbReference>
<dbReference type="PRINTS" id="PR00794">
    <property type="entry name" value="RIBONUCLEASE"/>
</dbReference>
<dbReference type="SMART" id="SM00092">
    <property type="entry name" value="RNAse_Pc"/>
    <property type="match status" value="1"/>
</dbReference>
<dbReference type="SUPFAM" id="SSF54076">
    <property type="entry name" value="RNase A-like"/>
    <property type="match status" value="1"/>
</dbReference>
<dbReference type="PROSITE" id="PS00127">
    <property type="entry name" value="RNASE_PANCREATIC"/>
    <property type="match status" value="1"/>
</dbReference>
<evidence type="ECO:0000250" key="1"/>
<evidence type="ECO:0000256" key="2">
    <source>
        <dbReference type="SAM" id="MobiDB-lite"/>
    </source>
</evidence>
<evidence type="ECO:0000305" key="3"/>
<proteinExistence type="evidence at protein level"/>
<name>RNAS1_HYDHY</name>
<gene>
    <name type="primary">RNASE1</name>
    <name type="synonym">RNS1</name>
</gene>
<comment type="function">
    <text evidence="1">Endonuclease that catalyzes the cleavage of RNA on the 3' side of pyrimidine nucleotides. Acts on single-stranded and double-stranded RNA (By similarity).</text>
</comment>
<comment type="catalytic activity">
    <reaction>
        <text>an [RNA] containing cytidine + H2O = an [RNA]-3'-cytidine-3'-phosphate + a 5'-hydroxy-ribonucleotide-3'-[RNA].</text>
        <dbReference type="EC" id="4.6.1.18"/>
    </reaction>
</comment>
<comment type="catalytic activity">
    <reaction>
        <text>an [RNA] containing uridine + H2O = an [RNA]-3'-uridine-3'-phosphate + a 5'-hydroxy-ribonucleotide-3'-[RNA].</text>
        <dbReference type="EC" id="4.6.1.18"/>
    </reaction>
</comment>
<comment type="subunit">
    <text evidence="1">Monomer. Interacts with and forms tight 1:1 complexes with RNH1. Dimerization of two such complexes may occur. Interaction with RNH1 inhibits this protein (By similarity).</text>
</comment>
<comment type="subcellular location">
    <subcellularLocation>
        <location>Secreted</location>
    </subcellularLocation>
</comment>
<comment type="tissue specificity">
    <text>Pancreas.</text>
</comment>
<comment type="similarity">
    <text evidence="3">Belongs to the pancreatic ribonuclease family.</text>
</comment>
<sequence length="128" mass="14345">AESSAMKFQRQHVDSEGSSSSNANYCNEMMVRRKMTQDRCKPVNTFVHEPLADVQAVCFQKNVPCKNGQTNCYQSYSSMHITDCRVTSNSKFPDCSYRTTQAQKSIVVACEGNLYVPVHFDASVEPST</sequence>
<accession>P00677</accession>
<organism>
    <name type="scientific">Hydrochoerus hydrochaeris</name>
    <name type="common">Capybara</name>
    <name type="synonym">Carpincho</name>
    <dbReference type="NCBI Taxonomy" id="10149"/>
    <lineage>
        <taxon>Eukaryota</taxon>
        <taxon>Metazoa</taxon>
        <taxon>Chordata</taxon>
        <taxon>Craniata</taxon>
        <taxon>Vertebrata</taxon>
        <taxon>Euteleostomi</taxon>
        <taxon>Mammalia</taxon>
        <taxon>Eutheria</taxon>
        <taxon>Euarchontoglires</taxon>
        <taxon>Glires</taxon>
        <taxon>Rodentia</taxon>
        <taxon>Hystricomorpha</taxon>
        <taxon>Hydrochaeridae</taxon>
        <taxon>Hydrochoerus</taxon>
    </lineage>
</organism>
<protein>
    <recommendedName>
        <fullName>Ribonuclease pancreatic</fullName>
        <ecNumber>4.6.1.18</ecNumber>
    </recommendedName>
    <alternativeName>
        <fullName>RNase 1</fullName>
    </alternativeName>
    <alternativeName>
        <fullName>RNase A</fullName>
    </alternativeName>
</protein>
<keyword id="KW-0903">Direct protein sequencing</keyword>
<keyword id="KW-1015">Disulfide bond</keyword>
<keyword id="KW-0255">Endonuclease</keyword>
<keyword id="KW-0378">Hydrolase</keyword>
<keyword id="KW-0456">Lyase</keyword>
<keyword id="KW-0540">Nuclease</keyword>
<keyword id="KW-0964">Secreted</keyword>
<reference key="1">
    <citation type="journal article" date="1983" name="J. Mol. Evol.">
        <title>Origin of the duplicated ribonuclease gene in guinea-pig: comparison of the amino acid sequences with those of two close relatives: capybara and cuis ribonuclease.</title>
        <authorList>
            <person name="Beintema J.J."/>
            <person name="Neuteboom B."/>
        </authorList>
    </citation>
    <scope>PROTEIN SEQUENCE</scope>
</reference>